<sequence length="156" mass="17455">MKLQLIAVGTRMPDWVTRGFEEYQRRFPRDMALELIEIPAGKRGKNADIVRILQKEGEQMLAAIPKGNHIVSLDLPGKNWTTPELATALSKWQLDGRDVSLLVGGPEGLAPACKDAAHQSWCLSALTLPHPLVRIVVAESLYRAWSVNTNHPYHRE</sequence>
<organism>
    <name type="scientific">Shewanella sp. (strain W3-18-1)</name>
    <dbReference type="NCBI Taxonomy" id="351745"/>
    <lineage>
        <taxon>Bacteria</taxon>
        <taxon>Pseudomonadati</taxon>
        <taxon>Pseudomonadota</taxon>
        <taxon>Gammaproteobacteria</taxon>
        <taxon>Alteromonadales</taxon>
        <taxon>Shewanellaceae</taxon>
        <taxon>Shewanella</taxon>
    </lineage>
</organism>
<protein>
    <recommendedName>
        <fullName evidence="1">Ribosomal RNA large subunit methyltransferase H</fullName>
        <ecNumber evidence="1">2.1.1.177</ecNumber>
    </recommendedName>
    <alternativeName>
        <fullName evidence="1">23S rRNA (pseudouridine1915-N3)-methyltransferase</fullName>
    </alternativeName>
    <alternativeName>
        <fullName evidence="1">23S rRNA m3Psi1915 methyltransferase</fullName>
    </alternativeName>
    <alternativeName>
        <fullName evidence="1">rRNA (pseudouridine-N3-)-methyltransferase RlmH</fullName>
    </alternativeName>
</protein>
<keyword id="KW-0963">Cytoplasm</keyword>
<keyword id="KW-0489">Methyltransferase</keyword>
<keyword id="KW-0698">rRNA processing</keyword>
<keyword id="KW-0949">S-adenosyl-L-methionine</keyword>
<keyword id="KW-0808">Transferase</keyword>
<feature type="chain" id="PRO_1000061841" description="Ribosomal RNA large subunit methyltransferase H">
    <location>
        <begin position="1"/>
        <end position="156"/>
    </location>
</feature>
<feature type="binding site" evidence="1">
    <location>
        <position position="73"/>
    </location>
    <ligand>
        <name>S-adenosyl-L-methionine</name>
        <dbReference type="ChEBI" id="CHEBI:59789"/>
    </ligand>
</feature>
<feature type="binding site" evidence="1">
    <location>
        <position position="104"/>
    </location>
    <ligand>
        <name>S-adenosyl-L-methionine</name>
        <dbReference type="ChEBI" id="CHEBI:59789"/>
    </ligand>
</feature>
<feature type="binding site" evidence="1">
    <location>
        <begin position="123"/>
        <end position="128"/>
    </location>
    <ligand>
        <name>S-adenosyl-L-methionine</name>
        <dbReference type="ChEBI" id="CHEBI:59789"/>
    </ligand>
</feature>
<accession>A1RGU0</accession>
<evidence type="ECO:0000255" key="1">
    <source>
        <dbReference type="HAMAP-Rule" id="MF_00658"/>
    </source>
</evidence>
<reference key="1">
    <citation type="submission" date="2006-12" db="EMBL/GenBank/DDBJ databases">
        <title>Complete sequence of Shewanella sp. W3-18-1.</title>
        <authorList>
            <consortium name="US DOE Joint Genome Institute"/>
            <person name="Copeland A."/>
            <person name="Lucas S."/>
            <person name="Lapidus A."/>
            <person name="Barry K."/>
            <person name="Detter J.C."/>
            <person name="Glavina del Rio T."/>
            <person name="Hammon N."/>
            <person name="Israni S."/>
            <person name="Dalin E."/>
            <person name="Tice H."/>
            <person name="Pitluck S."/>
            <person name="Chain P."/>
            <person name="Malfatti S."/>
            <person name="Shin M."/>
            <person name="Vergez L."/>
            <person name="Schmutz J."/>
            <person name="Larimer F."/>
            <person name="Land M."/>
            <person name="Hauser L."/>
            <person name="Kyrpides N."/>
            <person name="Lykidis A."/>
            <person name="Tiedje J."/>
            <person name="Richardson P."/>
        </authorList>
    </citation>
    <scope>NUCLEOTIDE SEQUENCE [LARGE SCALE GENOMIC DNA]</scope>
    <source>
        <strain>W3-18-1</strain>
    </source>
</reference>
<proteinExistence type="inferred from homology"/>
<comment type="function">
    <text evidence="1">Specifically methylates the pseudouridine at position 1915 (m3Psi1915) in 23S rRNA.</text>
</comment>
<comment type="catalytic activity">
    <reaction evidence="1">
        <text>pseudouridine(1915) in 23S rRNA + S-adenosyl-L-methionine = N(3)-methylpseudouridine(1915) in 23S rRNA + S-adenosyl-L-homocysteine + H(+)</text>
        <dbReference type="Rhea" id="RHEA:42752"/>
        <dbReference type="Rhea" id="RHEA-COMP:10221"/>
        <dbReference type="Rhea" id="RHEA-COMP:10222"/>
        <dbReference type="ChEBI" id="CHEBI:15378"/>
        <dbReference type="ChEBI" id="CHEBI:57856"/>
        <dbReference type="ChEBI" id="CHEBI:59789"/>
        <dbReference type="ChEBI" id="CHEBI:65314"/>
        <dbReference type="ChEBI" id="CHEBI:74486"/>
        <dbReference type="EC" id="2.1.1.177"/>
    </reaction>
</comment>
<comment type="subunit">
    <text evidence="1">Homodimer.</text>
</comment>
<comment type="subcellular location">
    <subcellularLocation>
        <location evidence="1">Cytoplasm</location>
    </subcellularLocation>
</comment>
<comment type="similarity">
    <text evidence="1">Belongs to the RNA methyltransferase RlmH family.</text>
</comment>
<name>RLMH_SHESW</name>
<gene>
    <name evidence="1" type="primary">rlmH</name>
    <name type="ordered locus">Sputw3181_1035</name>
</gene>
<dbReference type="EC" id="2.1.1.177" evidence="1"/>
<dbReference type="EMBL" id="CP000503">
    <property type="protein sequence ID" value="ABM23885.1"/>
    <property type="molecule type" value="Genomic_DNA"/>
</dbReference>
<dbReference type="RefSeq" id="WP_011788410.1">
    <property type="nucleotide sequence ID" value="NC_008750.1"/>
</dbReference>
<dbReference type="SMR" id="A1RGU0"/>
<dbReference type="GeneID" id="67444490"/>
<dbReference type="KEGG" id="shw:Sputw3181_1035"/>
<dbReference type="HOGENOM" id="CLU_100552_1_0_6"/>
<dbReference type="Proteomes" id="UP000002597">
    <property type="component" value="Chromosome"/>
</dbReference>
<dbReference type="GO" id="GO:0005737">
    <property type="term" value="C:cytoplasm"/>
    <property type="evidence" value="ECO:0007669"/>
    <property type="project" value="UniProtKB-SubCell"/>
</dbReference>
<dbReference type="GO" id="GO:0070038">
    <property type="term" value="F:rRNA (pseudouridine-N3-)-methyltransferase activity"/>
    <property type="evidence" value="ECO:0007669"/>
    <property type="project" value="UniProtKB-UniRule"/>
</dbReference>
<dbReference type="CDD" id="cd18081">
    <property type="entry name" value="RlmH-like"/>
    <property type="match status" value="1"/>
</dbReference>
<dbReference type="Gene3D" id="3.40.1280.10">
    <property type="match status" value="1"/>
</dbReference>
<dbReference type="HAMAP" id="MF_00658">
    <property type="entry name" value="23SrRNA_methyltr_H"/>
    <property type="match status" value="1"/>
</dbReference>
<dbReference type="InterPro" id="IPR029028">
    <property type="entry name" value="Alpha/beta_knot_MTases"/>
</dbReference>
<dbReference type="InterPro" id="IPR003742">
    <property type="entry name" value="RlmH-like"/>
</dbReference>
<dbReference type="InterPro" id="IPR029026">
    <property type="entry name" value="tRNA_m1G_MTases_N"/>
</dbReference>
<dbReference type="NCBIfam" id="NF000984">
    <property type="entry name" value="PRK00103.1-1"/>
    <property type="match status" value="1"/>
</dbReference>
<dbReference type="NCBIfam" id="NF000986">
    <property type="entry name" value="PRK00103.1-4"/>
    <property type="match status" value="1"/>
</dbReference>
<dbReference type="NCBIfam" id="TIGR00246">
    <property type="entry name" value="tRNA_RlmH_YbeA"/>
    <property type="match status" value="1"/>
</dbReference>
<dbReference type="PANTHER" id="PTHR33603">
    <property type="entry name" value="METHYLTRANSFERASE"/>
    <property type="match status" value="1"/>
</dbReference>
<dbReference type="PANTHER" id="PTHR33603:SF1">
    <property type="entry name" value="RIBOSOMAL RNA LARGE SUBUNIT METHYLTRANSFERASE H"/>
    <property type="match status" value="1"/>
</dbReference>
<dbReference type="Pfam" id="PF02590">
    <property type="entry name" value="SPOUT_MTase"/>
    <property type="match status" value="1"/>
</dbReference>
<dbReference type="PIRSF" id="PIRSF004505">
    <property type="entry name" value="MT_bac"/>
    <property type="match status" value="1"/>
</dbReference>
<dbReference type="SUPFAM" id="SSF75217">
    <property type="entry name" value="alpha/beta knot"/>
    <property type="match status" value="1"/>
</dbReference>